<gene>
    <name evidence="1" type="primary">hemH</name>
    <name type="ordered locus">PP_0744</name>
</gene>
<protein>
    <recommendedName>
        <fullName evidence="1">Ferrochelatase</fullName>
        <ecNumber evidence="1">4.98.1.1</ecNumber>
    </recommendedName>
    <alternativeName>
        <fullName evidence="1">Heme synthase</fullName>
    </alternativeName>
    <alternativeName>
        <fullName evidence="1">Protoheme ferro-lyase</fullName>
    </alternativeName>
</protein>
<keyword id="KW-0963">Cytoplasm</keyword>
<keyword id="KW-0350">Heme biosynthesis</keyword>
<keyword id="KW-0408">Iron</keyword>
<keyword id="KW-0456">Lyase</keyword>
<keyword id="KW-0479">Metal-binding</keyword>
<keyword id="KW-0627">Porphyrin biosynthesis</keyword>
<keyword id="KW-1185">Reference proteome</keyword>
<comment type="function">
    <text evidence="1">Catalyzes the ferrous insertion into protoporphyrin IX.</text>
</comment>
<comment type="catalytic activity">
    <reaction evidence="1">
        <text>heme b + 2 H(+) = protoporphyrin IX + Fe(2+)</text>
        <dbReference type="Rhea" id="RHEA:22584"/>
        <dbReference type="ChEBI" id="CHEBI:15378"/>
        <dbReference type="ChEBI" id="CHEBI:29033"/>
        <dbReference type="ChEBI" id="CHEBI:57306"/>
        <dbReference type="ChEBI" id="CHEBI:60344"/>
        <dbReference type="EC" id="4.98.1.1"/>
    </reaction>
</comment>
<comment type="pathway">
    <text evidence="1">Porphyrin-containing compound metabolism; protoheme biosynthesis; protoheme from protoporphyrin-IX: step 1/1.</text>
</comment>
<comment type="subcellular location">
    <subcellularLocation>
        <location evidence="1">Cytoplasm</location>
    </subcellularLocation>
</comment>
<comment type="similarity">
    <text evidence="1">Belongs to the ferrochelatase family.</text>
</comment>
<organism>
    <name type="scientific">Pseudomonas putida (strain ATCC 47054 / DSM 6125 / CFBP 8728 / NCIMB 11950 / KT2440)</name>
    <dbReference type="NCBI Taxonomy" id="160488"/>
    <lineage>
        <taxon>Bacteria</taxon>
        <taxon>Pseudomonadati</taxon>
        <taxon>Pseudomonadota</taxon>
        <taxon>Gammaproteobacteria</taxon>
        <taxon>Pseudomonadales</taxon>
        <taxon>Pseudomonadaceae</taxon>
        <taxon>Pseudomonas</taxon>
    </lineage>
</organism>
<dbReference type="EC" id="4.98.1.1" evidence="1"/>
<dbReference type="EMBL" id="AE015451">
    <property type="protein sequence ID" value="AAN66369.1"/>
    <property type="molecule type" value="Genomic_DNA"/>
</dbReference>
<dbReference type="RefSeq" id="NP_742905.1">
    <property type="nucleotide sequence ID" value="NC_002947.4"/>
</dbReference>
<dbReference type="RefSeq" id="WP_010951989.1">
    <property type="nucleotide sequence ID" value="NZ_CP169744.1"/>
</dbReference>
<dbReference type="SMR" id="Q88PV4"/>
<dbReference type="STRING" id="160488.PP_0744"/>
<dbReference type="PaxDb" id="160488-PP_0744"/>
<dbReference type="GeneID" id="83678097"/>
<dbReference type="KEGG" id="ppu:PP_0744"/>
<dbReference type="PATRIC" id="fig|160488.4.peg.798"/>
<dbReference type="eggNOG" id="COG0276">
    <property type="taxonomic scope" value="Bacteria"/>
</dbReference>
<dbReference type="HOGENOM" id="CLU_018884_0_1_6"/>
<dbReference type="OrthoDB" id="9809741at2"/>
<dbReference type="PhylomeDB" id="Q88PV4"/>
<dbReference type="BioCyc" id="PPUT160488:G1G01-819-MONOMER"/>
<dbReference type="UniPathway" id="UPA00252">
    <property type="reaction ID" value="UER00325"/>
</dbReference>
<dbReference type="Proteomes" id="UP000000556">
    <property type="component" value="Chromosome"/>
</dbReference>
<dbReference type="GO" id="GO:0005737">
    <property type="term" value="C:cytoplasm"/>
    <property type="evidence" value="ECO:0007669"/>
    <property type="project" value="UniProtKB-SubCell"/>
</dbReference>
<dbReference type="GO" id="GO:0004325">
    <property type="term" value="F:ferrochelatase activity"/>
    <property type="evidence" value="ECO:0007669"/>
    <property type="project" value="UniProtKB-UniRule"/>
</dbReference>
<dbReference type="GO" id="GO:0046872">
    <property type="term" value="F:metal ion binding"/>
    <property type="evidence" value="ECO:0007669"/>
    <property type="project" value="UniProtKB-KW"/>
</dbReference>
<dbReference type="GO" id="GO:0006783">
    <property type="term" value="P:heme biosynthetic process"/>
    <property type="evidence" value="ECO:0007669"/>
    <property type="project" value="UniProtKB-UniRule"/>
</dbReference>
<dbReference type="CDD" id="cd00419">
    <property type="entry name" value="Ferrochelatase_C"/>
    <property type="match status" value="1"/>
</dbReference>
<dbReference type="CDD" id="cd03411">
    <property type="entry name" value="Ferrochelatase_N"/>
    <property type="match status" value="1"/>
</dbReference>
<dbReference type="Gene3D" id="3.40.50.1400">
    <property type="match status" value="2"/>
</dbReference>
<dbReference type="HAMAP" id="MF_00323">
    <property type="entry name" value="Ferrochelatase"/>
    <property type="match status" value="1"/>
</dbReference>
<dbReference type="InterPro" id="IPR001015">
    <property type="entry name" value="Ferrochelatase"/>
</dbReference>
<dbReference type="InterPro" id="IPR033644">
    <property type="entry name" value="Ferrochelatase_C"/>
</dbReference>
<dbReference type="InterPro" id="IPR033659">
    <property type="entry name" value="Ferrochelatase_N"/>
</dbReference>
<dbReference type="NCBIfam" id="TIGR00109">
    <property type="entry name" value="hemH"/>
    <property type="match status" value="1"/>
</dbReference>
<dbReference type="PANTHER" id="PTHR11108">
    <property type="entry name" value="FERROCHELATASE"/>
    <property type="match status" value="1"/>
</dbReference>
<dbReference type="PANTHER" id="PTHR11108:SF1">
    <property type="entry name" value="FERROCHELATASE, MITOCHONDRIAL"/>
    <property type="match status" value="1"/>
</dbReference>
<dbReference type="Pfam" id="PF00762">
    <property type="entry name" value="Ferrochelatase"/>
    <property type="match status" value="1"/>
</dbReference>
<dbReference type="SUPFAM" id="SSF53800">
    <property type="entry name" value="Chelatase"/>
    <property type="match status" value="1"/>
</dbReference>
<feature type="chain" id="PRO_0000175185" description="Ferrochelatase">
    <location>
        <begin position="1"/>
        <end position="338"/>
    </location>
</feature>
<feature type="binding site" evidence="1">
    <location>
        <position position="189"/>
    </location>
    <ligand>
        <name>Fe cation</name>
        <dbReference type="ChEBI" id="CHEBI:24875"/>
    </ligand>
</feature>
<feature type="binding site" evidence="1">
    <location>
        <position position="294"/>
    </location>
    <ligand>
        <name>Fe cation</name>
        <dbReference type="ChEBI" id="CHEBI:24875"/>
    </ligand>
</feature>
<accession>Q88PV4</accession>
<proteinExistence type="inferred from homology"/>
<sequence>MTDHALLLVNLGSPASTSVADVRRYLNQFLMDPYVIDLPWPVRRLLVSLVLIKRPEQSAHAYASIWWEEGSPLVVLTRRLQAAMAEHWPHGPVEIAMRYGQPALPDVLARLAAQGVRKVTLAPLYPQFADSTVTTVIEQAKQTVSEHQLPLQMRVLQPFYEHPAYIEALAASARPYLEQGYDHLLLSFHGLPERHLKKLFPKGVKHDLRAADCCHGATAEVSSVCYRGQCLATAKAFAQSMGIPDGKWSVSFQSRLGRDKWIEPYTETRLDELAKAGVKKLLVMCPAFVADCIETLEEIGMRGSEQFVEAGGQELVLVPCLNDHPEWVRVLADMCEKA</sequence>
<evidence type="ECO:0000255" key="1">
    <source>
        <dbReference type="HAMAP-Rule" id="MF_00323"/>
    </source>
</evidence>
<reference key="1">
    <citation type="journal article" date="2002" name="Environ. Microbiol.">
        <title>Complete genome sequence and comparative analysis of the metabolically versatile Pseudomonas putida KT2440.</title>
        <authorList>
            <person name="Nelson K.E."/>
            <person name="Weinel C."/>
            <person name="Paulsen I.T."/>
            <person name="Dodson R.J."/>
            <person name="Hilbert H."/>
            <person name="Martins dos Santos V.A.P."/>
            <person name="Fouts D.E."/>
            <person name="Gill S.R."/>
            <person name="Pop M."/>
            <person name="Holmes M."/>
            <person name="Brinkac L.M."/>
            <person name="Beanan M.J."/>
            <person name="DeBoy R.T."/>
            <person name="Daugherty S.C."/>
            <person name="Kolonay J.F."/>
            <person name="Madupu R."/>
            <person name="Nelson W.C."/>
            <person name="White O."/>
            <person name="Peterson J.D."/>
            <person name="Khouri H.M."/>
            <person name="Hance I."/>
            <person name="Chris Lee P."/>
            <person name="Holtzapple E.K."/>
            <person name="Scanlan D."/>
            <person name="Tran K."/>
            <person name="Moazzez A."/>
            <person name="Utterback T.R."/>
            <person name="Rizzo M."/>
            <person name="Lee K."/>
            <person name="Kosack D."/>
            <person name="Moestl D."/>
            <person name="Wedler H."/>
            <person name="Lauber J."/>
            <person name="Stjepandic D."/>
            <person name="Hoheisel J."/>
            <person name="Straetz M."/>
            <person name="Heim S."/>
            <person name="Kiewitz C."/>
            <person name="Eisen J.A."/>
            <person name="Timmis K.N."/>
            <person name="Duesterhoeft A."/>
            <person name="Tuemmler B."/>
            <person name="Fraser C.M."/>
        </authorList>
    </citation>
    <scope>NUCLEOTIDE SEQUENCE [LARGE SCALE GENOMIC DNA]</scope>
    <source>
        <strain>ATCC 47054 / DSM 6125 / CFBP 8728 / NCIMB 11950 / KT2440</strain>
    </source>
</reference>
<name>HEMH_PSEPK</name>